<gene>
    <name evidence="1" type="primary">ssuD</name>
    <name type="ordered locus">Vapar_2976</name>
</gene>
<reference key="1">
    <citation type="journal article" date="2011" name="J. Bacteriol.">
        <title>Complete genome sequence of the metabolically versatile plant growth-promoting endophyte, Variovorax paradoxus S110.</title>
        <authorList>
            <person name="Han J.I."/>
            <person name="Choi H.K."/>
            <person name="Lee S.W."/>
            <person name="Orwin P.M."/>
            <person name="Kim J."/>
            <person name="Laroe S.L."/>
            <person name="Kim T.G."/>
            <person name="O'Neil J."/>
            <person name="Leadbetter J.R."/>
            <person name="Lee S.Y."/>
            <person name="Hur C.G."/>
            <person name="Spain J.C."/>
            <person name="Ovchinnikova G."/>
            <person name="Goodwin L."/>
            <person name="Han C."/>
        </authorList>
    </citation>
    <scope>NUCLEOTIDE SEQUENCE [LARGE SCALE GENOMIC DNA]</scope>
    <source>
        <strain>S110</strain>
    </source>
</reference>
<accession>C5CNW9</accession>
<organism>
    <name type="scientific">Variovorax paradoxus (strain S110)</name>
    <dbReference type="NCBI Taxonomy" id="543728"/>
    <lineage>
        <taxon>Bacteria</taxon>
        <taxon>Pseudomonadati</taxon>
        <taxon>Pseudomonadota</taxon>
        <taxon>Betaproteobacteria</taxon>
        <taxon>Burkholderiales</taxon>
        <taxon>Comamonadaceae</taxon>
        <taxon>Variovorax</taxon>
    </lineage>
</organism>
<proteinExistence type="inferred from homology"/>
<keyword id="KW-0285">Flavoprotein</keyword>
<keyword id="KW-0288">FMN</keyword>
<keyword id="KW-0503">Monooxygenase</keyword>
<keyword id="KW-0560">Oxidoreductase</keyword>
<evidence type="ECO:0000255" key="1">
    <source>
        <dbReference type="HAMAP-Rule" id="MF_01229"/>
    </source>
</evidence>
<dbReference type="EC" id="1.14.14.5" evidence="1"/>
<dbReference type="EMBL" id="CP001635">
    <property type="protein sequence ID" value="ACS19596.1"/>
    <property type="molecule type" value="Genomic_DNA"/>
</dbReference>
<dbReference type="SMR" id="C5CNW9"/>
<dbReference type="STRING" id="543728.Vapar_2976"/>
<dbReference type="KEGG" id="vap:Vapar_2976"/>
<dbReference type="eggNOG" id="COG2141">
    <property type="taxonomic scope" value="Bacteria"/>
</dbReference>
<dbReference type="HOGENOM" id="CLU_027853_1_0_4"/>
<dbReference type="OrthoDB" id="9814695at2"/>
<dbReference type="GO" id="GO:0008726">
    <property type="term" value="F:alkanesulfonate monooxygenase activity"/>
    <property type="evidence" value="ECO:0007669"/>
    <property type="project" value="UniProtKB-UniRule"/>
</dbReference>
<dbReference type="GO" id="GO:0046306">
    <property type="term" value="P:alkanesulfonate catabolic process"/>
    <property type="evidence" value="ECO:0007669"/>
    <property type="project" value="TreeGrafter"/>
</dbReference>
<dbReference type="CDD" id="cd01094">
    <property type="entry name" value="Alkanesulfonate_monoxygenase"/>
    <property type="match status" value="1"/>
</dbReference>
<dbReference type="Gene3D" id="3.20.20.30">
    <property type="entry name" value="Luciferase-like domain"/>
    <property type="match status" value="1"/>
</dbReference>
<dbReference type="HAMAP" id="MF_01229">
    <property type="entry name" value="Alkanesulf_monooxygen"/>
    <property type="match status" value="1"/>
</dbReference>
<dbReference type="InterPro" id="IPR019911">
    <property type="entry name" value="Alkanesulphonate_mOase_FMN-dep"/>
</dbReference>
<dbReference type="InterPro" id="IPR011251">
    <property type="entry name" value="Luciferase-like_dom"/>
</dbReference>
<dbReference type="InterPro" id="IPR036661">
    <property type="entry name" value="Luciferase-like_sf"/>
</dbReference>
<dbReference type="InterPro" id="IPR050172">
    <property type="entry name" value="SsuD_RutA_monooxygenase"/>
</dbReference>
<dbReference type="NCBIfam" id="TIGR03565">
    <property type="entry name" value="alk_sulf_monoox"/>
    <property type="match status" value="1"/>
</dbReference>
<dbReference type="NCBIfam" id="NF001939">
    <property type="entry name" value="PRK00719.1"/>
    <property type="match status" value="1"/>
</dbReference>
<dbReference type="PANTHER" id="PTHR42847">
    <property type="entry name" value="ALKANESULFONATE MONOOXYGENASE"/>
    <property type="match status" value="1"/>
</dbReference>
<dbReference type="PANTHER" id="PTHR42847:SF4">
    <property type="entry name" value="ALKANESULFONATE MONOOXYGENASE-RELATED"/>
    <property type="match status" value="1"/>
</dbReference>
<dbReference type="Pfam" id="PF00296">
    <property type="entry name" value="Bac_luciferase"/>
    <property type="match status" value="1"/>
</dbReference>
<dbReference type="SUPFAM" id="SSF51679">
    <property type="entry name" value="Bacterial luciferase-like"/>
    <property type="match status" value="1"/>
</dbReference>
<protein>
    <recommendedName>
        <fullName evidence="1">Alkanesulfonate monooxygenase</fullName>
        <ecNumber evidence="1">1.14.14.5</ecNumber>
    </recommendedName>
    <alternativeName>
        <fullName evidence="1">FMNH2-dependent aliphatic sulfonate monooxygenase</fullName>
    </alternativeName>
</protein>
<name>SSUD_VARPS</name>
<comment type="function">
    <text evidence="1">Catalyzes the desulfonation of aliphatic sulfonates.</text>
</comment>
<comment type="catalytic activity">
    <reaction evidence="1">
        <text>an alkanesulfonate + FMNH2 + O2 = an aldehyde + FMN + sulfite + H2O + 2 H(+)</text>
        <dbReference type="Rhea" id="RHEA:23064"/>
        <dbReference type="ChEBI" id="CHEBI:15377"/>
        <dbReference type="ChEBI" id="CHEBI:15378"/>
        <dbReference type="ChEBI" id="CHEBI:15379"/>
        <dbReference type="ChEBI" id="CHEBI:17359"/>
        <dbReference type="ChEBI" id="CHEBI:17478"/>
        <dbReference type="ChEBI" id="CHEBI:57618"/>
        <dbReference type="ChEBI" id="CHEBI:58210"/>
        <dbReference type="ChEBI" id="CHEBI:134249"/>
        <dbReference type="EC" id="1.14.14.5"/>
    </reaction>
</comment>
<comment type="similarity">
    <text evidence="1">Belongs to the SsuD family.</text>
</comment>
<sequence length="389" mass="42241">MQIFWFLPTHGDSRYLGTSEGARPIDLAYLQQIAGAADQLGYEGVLIPTGRSCEDPWVIASSLIGATKNLKFLVAVRPGLHQPSLAARMAATFDRLSGGRLLVNLVTGGDQSELEGDGVYLDHAQRYEQSAEFIRIWREILARSHSGQAFDYEGRHLSVKGAKLLYPPVQEPYPPVWFGGSSAAAHELAAEQVDAYLTWGEPPAEVARKIADVRNRAARKGRTVEFGIRLHVIVRETEDAAWKAAEELISRVDDETVIRAQAAFARMDSEGQRRMAALHAGGARRSRAELEISPNLWAGVGLVRGGAGTALVGDPKTVAARIEEYAALGLDKFILSGYPHLEEAYRFAELVFPLLSRKAQSRLAGGSLSGPFGEVVANLDAPSRLASQS</sequence>
<feature type="chain" id="PRO_1000214024" description="Alkanesulfonate monooxygenase">
    <location>
        <begin position="1"/>
        <end position="389"/>
    </location>
</feature>